<dbReference type="EC" id="6.3.2.1" evidence="1"/>
<dbReference type="EMBL" id="CU928163">
    <property type="protein sequence ID" value="CAR11353.1"/>
    <property type="molecule type" value="Genomic_DNA"/>
</dbReference>
<dbReference type="RefSeq" id="WP_000905382.1">
    <property type="nucleotide sequence ID" value="NC_011751.1"/>
</dbReference>
<dbReference type="RefSeq" id="YP_002410909.1">
    <property type="nucleotide sequence ID" value="NC_011751.1"/>
</dbReference>
<dbReference type="SMR" id="B7N803"/>
<dbReference type="STRING" id="585056.ECUMN_0131"/>
<dbReference type="KEGG" id="eum:ECUMN_0131"/>
<dbReference type="PATRIC" id="fig|585056.7.peg.323"/>
<dbReference type="HOGENOM" id="CLU_047148_0_0_6"/>
<dbReference type="UniPathway" id="UPA00028">
    <property type="reaction ID" value="UER00005"/>
</dbReference>
<dbReference type="Proteomes" id="UP000007097">
    <property type="component" value="Chromosome"/>
</dbReference>
<dbReference type="GO" id="GO:0005829">
    <property type="term" value="C:cytosol"/>
    <property type="evidence" value="ECO:0007669"/>
    <property type="project" value="TreeGrafter"/>
</dbReference>
<dbReference type="GO" id="GO:0005524">
    <property type="term" value="F:ATP binding"/>
    <property type="evidence" value="ECO:0007669"/>
    <property type="project" value="UniProtKB-KW"/>
</dbReference>
<dbReference type="GO" id="GO:0004592">
    <property type="term" value="F:pantoate-beta-alanine ligase activity"/>
    <property type="evidence" value="ECO:0007669"/>
    <property type="project" value="UniProtKB-UniRule"/>
</dbReference>
<dbReference type="GO" id="GO:0015940">
    <property type="term" value="P:pantothenate biosynthetic process"/>
    <property type="evidence" value="ECO:0007669"/>
    <property type="project" value="UniProtKB-UniRule"/>
</dbReference>
<dbReference type="CDD" id="cd00560">
    <property type="entry name" value="PanC"/>
    <property type="match status" value="1"/>
</dbReference>
<dbReference type="FunFam" id="3.30.1300.10:FF:000001">
    <property type="entry name" value="Pantothenate synthetase"/>
    <property type="match status" value="1"/>
</dbReference>
<dbReference type="FunFam" id="3.40.50.620:FF:000013">
    <property type="entry name" value="Pantothenate synthetase"/>
    <property type="match status" value="1"/>
</dbReference>
<dbReference type="Gene3D" id="3.40.50.620">
    <property type="entry name" value="HUPs"/>
    <property type="match status" value="1"/>
</dbReference>
<dbReference type="Gene3D" id="3.30.1300.10">
    <property type="entry name" value="Pantoate-beta-alanine ligase, C-terminal domain"/>
    <property type="match status" value="1"/>
</dbReference>
<dbReference type="HAMAP" id="MF_00158">
    <property type="entry name" value="PanC"/>
    <property type="match status" value="1"/>
</dbReference>
<dbReference type="InterPro" id="IPR004821">
    <property type="entry name" value="Cyt_trans-like"/>
</dbReference>
<dbReference type="InterPro" id="IPR003721">
    <property type="entry name" value="Pantoate_ligase"/>
</dbReference>
<dbReference type="InterPro" id="IPR042176">
    <property type="entry name" value="Pantoate_ligase_C"/>
</dbReference>
<dbReference type="InterPro" id="IPR014729">
    <property type="entry name" value="Rossmann-like_a/b/a_fold"/>
</dbReference>
<dbReference type="NCBIfam" id="TIGR00125">
    <property type="entry name" value="cyt_tran_rel"/>
    <property type="match status" value="1"/>
</dbReference>
<dbReference type="NCBIfam" id="TIGR00018">
    <property type="entry name" value="panC"/>
    <property type="match status" value="1"/>
</dbReference>
<dbReference type="PANTHER" id="PTHR21299">
    <property type="entry name" value="CYTIDYLATE KINASE/PANTOATE-BETA-ALANINE LIGASE"/>
    <property type="match status" value="1"/>
</dbReference>
<dbReference type="PANTHER" id="PTHR21299:SF1">
    <property type="entry name" value="PANTOATE--BETA-ALANINE LIGASE"/>
    <property type="match status" value="1"/>
</dbReference>
<dbReference type="Pfam" id="PF02569">
    <property type="entry name" value="Pantoate_ligase"/>
    <property type="match status" value="1"/>
</dbReference>
<dbReference type="SUPFAM" id="SSF52374">
    <property type="entry name" value="Nucleotidylyl transferase"/>
    <property type="match status" value="1"/>
</dbReference>
<protein>
    <recommendedName>
        <fullName evidence="1">Pantothenate synthetase</fullName>
        <shortName evidence="1">PS</shortName>
        <ecNumber evidence="1">6.3.2.1</ecNumber>
    </recommendedName>
    <alternativeName>
        <fullName evidence="1">Pantoate--beta-alanine ligase</fullName>
    </alternativeName>
    <alternativeName>
        <fullName evidence="1">Pantoate-activating enzyme</fullName>
    </alternativeName>
</protein>
<gene>
    <name evidence="1" type="primary">panC</name>
    <name type="ordered locus">ECUMN_0131</name>
</gene>
<proteinExistence type="inferred from homology"/>
<name>PANC_ECOLU</name>
<feature type="chain" id="PRO_1000118149" description="Pantothenate synthetase">
    <location>
        <begin position="1"/>
        <end position="283"/>
    </location>
</feature>
<feature type="active site" description="Proton donor" evidence="1">
    <location>
        <position position="37"/>
    </location>
</feature>
<feature type="binding site" evidence="1">
    <location>
        <begin position="30"/>
        <end position="37"/>
    </location>
    <ligand>
        <name>ATP</name>
        <dbReference type="ChEBI" id="CHEBI:30616"/>
    </ligand>
</feature>
<feature type="binding site" evidence="1">
    <location>
        <position position="61"/>
    </location>
    <ligand>
        <name>(R)-pantoate</name>
        <dbReference type="ChEBI" id="CHEBI:15980"/>
    </ligand>
</feature>
<feature type="binding site" evidence="1">
    <location>
        <position position="61"/>
    </location>
    <ligand>
        <name>beta-alanine</name>
        <dbReference type="ChEBI" id="CHEBI:57966"/>
    </ligand>
</feature>
<feature type="binding site" evidence="1">
    <location>
        <begin position="149"/>
        <end position="152"/>
    </location>
    <ligand>
        <name>ATP</name>
        <dbReference type="ChEBI" id="CHEBI:30616"/>
    </ligand>
</feature>
<feature type="binding site" evidence="1">
    <location>
        <position position="155"/>
    </location>
    <ligand>
        <name>(R)-pantoate</name>
        <dbReference type="ChEBI" id="CHEBI:15980"/>
    </ligand>
</feature>
<feature type="binding site" evidence="1">
    <location>
        <begin position="186"/>
        <end position="189"/>
    </location>
    <ligand>
        <name>ATP</name>
        <dbReference type="ChEBI" id="CHEBI:30616"/>
    </ligand>
</feature>
<reference key="1">
    <citation type="journal article" date="2009" name="PLoS Genet.">
        <title>Organised genome dynamics in the Escherichia coli species results in highly diverse adaptive paths.</title>
        <authorList>
            <person name="Touchon M."/>
            <person name="Hoede C."/>
            <person name="Tenaillon O."/>
            <person name="Barbe V."/>
            <person name="Baeriswyl S."/>
            <person name="Bidet P."/>
            <person name="Bingen E."/>
            <person name="Bonacorsi S."/>
            <person name="Bouchier C."/>
            <person name="Bouvet O."/>
            <person name="Calteau A."/>
            <person name="Chiapello H."/>
            <person name="Clermont O."/>
            <person name="Cruveiller S."/>
            <person name="Danchin A."/>
            <person name="Diard M."/>
            <person name="Dossat C."/>
            <person name="Karoui M.E."/>
            <person name="Frapy E."/>
            <person name="Garry L."/>
            <person name="Ghigo J.M."/>
            <person name="Gilles A.M."/>
            <person name="Johnson J."/>
            <person name="Le Bouguenec C."/>
            <person name="Lescat M."/>
            <person name="Mangenot S."/>
            <person name="Martinez-Jehanne V."/>
            <person name="Matic I."/>
            <person name="Nassif X."/>
            <person name="Oztas S."/>
            <person name="Petit M.A."/>
            <person name="Pichon C."/>
            <person name="Rouy Z."/>
            <person name="Ruf C.S."/>
            <person name="Schneider D."/>
            <person name="Tourret J."/>
            <person name="Vacherie B."/>
            <person name="Vallenet D."/>
            <person name="Medigue C."/>
            <person name="Rocha E.P.C."/>
            <person name="Denamur E."/>
        </authorList>
    </citation>
    <scope>NUCLEOTIDE SEQUENCE [LARGE SCALE GENOMIC DNA]</scope>
    <source>
        <strain>UMN026 / ExPEC</strain>
    </source>
</reference>
<sequence length="283" mass="31621">MLIIETLPLLRQQIRRLRMEGKRVALVPTMGNLHDGHMKLVDEAKARADVVVVSIFVNPMQFDRPEDLARYPRTLQEDCEKLNKRKVDLVFAPSVKEIYPNGTETHTYVDVPGLSTMLEGASRPGHFRGVSTIVSKLFNLVQPDIACFGEKDFQQLALIRKMVADMGFDIEIVGVPIMRAKDGLALSSRNGYLTAEQRKIAPGLYKVLSSIADKLQAGERDLDEIITIAGQELNEKGFRADDIQIRDADTLLEVSENSKRAVILVAAWLGDARLIDNKIVELV</sequence>
<evidence type="ECO:0000255" key="1">
    <source>
        <dbReference type="HAMAP-Rule" id="MF_00158"/>
    </source>
</evidence>
<keyword id="KW-0067">ATP-binding</keyword>
<keyword id="KW-0963">Cytoplasm</keyword>
<keyword id="KW-0436">Ligase</keyword>
<keyword id="KW-0547">Nucleotide-binding</keyword>
<keyword id="KW-0566">Pantothenate biosynthesis</keyword>
<accession>B7N803</accession>
<organism>
    <name type="scientific">Escherichia coli O17:K52:H18 (strain UMN026 / ExPEC)</name>
    <dbReference type="NCBI Taxonomy" id="585056"/>
    <lineage>
        <taxon>Bacteria</taxon>
        <taxon>Pseudomonadati</taxon>
        <taxon>Pseudomonadota</taxon>
        <taxon>Gammaproteobacteria</taxon>
        <taxon>Enterobacterales</taxon>
        <taxon>Enterobacteriaceae</taxon>
        <taxon>Escherichia</taxon>
    </lineage>
</organism>
<comment type="function">
    <text evidence="1">Catalyzes the condensation of pantoate with beta-alanine in an ATP-dependent reaction via a pantoyl-adenylate intermediate.</text>
</comment>
<comment type="catalytic activity">
    <reaction evidence="1">
        <text>(R)-pantoate + beta-alanine + ATP = (R)-pantothenate + AMP + diphosphate + H(+)</text>
        <dbReference type="Rhea" id="RHEA:10912"/>
        <dbReference type="ChEBI" id="CHEBI:15378"/>
        <dbReference type="ChEBI" id="CHEBI:15980"/>
        <dbReference type="ChEBI" id="CHEBI:29032"/>
        <dbReference type="ChEBI" id="CHEBI:30616"/>
        <dbReference type="ChEBI" id="CHEBI:33019"/>
        <dbReference type="ChEBI" id="CHEBI:57966"/>
        <dbReference type="ChEBI" id="CHEBI:456215"/>
        <dbReference type="EC" id="6.3.2.1"/>
    </reaction>
</comment>
<comment type="pathway">
    <text evidence="1">Cofactor biosynthesis; (R)-pantothenate biosynthesis; (R)-pantothenate from (R)-pantoate and beta-alanine: step 1/1.</text>
</comment>
<comment type="subunit">
    <text evidence="1">Homodimer.</text>
</comment>
<comment type="subcellular location">
    <subcellularLocation>
        <location evidence="1">Cytoplasm</location>
    </subcellularLocation>
</comment>
<comment type="miscellaneous">
    <text evidence="1">The reaction proceeds by a bi uni uni bi ping pong mechanism.</text>
</comment>
<comment type="similarity">
    <text evidence="1">Belongs to the pantothenate synthetase family.</text>
</comment>